<proteinExistence type="inferred from homology"/>
<gene>
    <name evidence="1" type="primary">mdh</name>
    <name type="ordered locus">HAPS_0981</name>
</gene>
<evidence type="ECO:0000255" key="1">
    <source>
        <dbReference type="HAMAP-Rule" id="MF_01516"/>
    </source>
</evidence>
<protein>
    <recommendedName>
        <fullName evidence="1">Malate dehydrogenase</fullName>
        <ecNumber evidence="1">1.1.1.37</ecNumber>
    </recommendedName>
</protein>
<comment type="function">
    <text evidence="1">Catalyzes the reversible oxidation of malate to oxaloacetate.</text>
</comment>
<comment type="catalytic activity">
    <reaction evidence="1">
        <text>(S)-malate + NAD(+) = oxaloacetate + NADH + H(+)</text>
        <dbReference type="Rhea" id="RHEA:21432"/>
        <dbReference type="ChEBI" id="CHEBI:15378"/>
        <dbReference type="ChEBI" id="CHEBI:15589"/>
        <dbReference type="ChEBI" id="CHEBI:16452"/>
        <dbReference type="ChEBI" id="CHEBI:57540"/>
        <dbReference type="ChEBI" id="CHEBI:57945"/>
        <dbReference type="EC" id="1.1.1.37"/>
    </reaction>
</comment>
<comment type="subunit">
    <text evidence="1">Homodimer.</text>
</comment>
<comment type="similarity">
    <text evidence="1">Belongs to the LDH/MDH superfamily. MDH type 1 family.</text>
</comment>
<organism>
    <name type="scientific">Glaesserella parasuis serovar 5 (strain SH0165)</name>
    <name type="common">Haemophilus parasuis</name>
    <dbReference type="NCBI Taxonomy" id="557723"/>
    <lineage>
        <taxon>Bacteria</taxon>
        <taxon>Pseudomonadati</taxon>
        <taxon>Pseudomonadota</taxon>
        <taxon>Gammaproteobacteria</taxon>
        <taxon>Pasteurellales</taxon>
        <taxon>Pasteurellaceae</taxon>
        <taxon>Glaesserella</taxon>
    </lineage>
</organism>
<sequence>MKVAVLGAAGGIGQALALLLKLQLPAGTNLALYDIAPVTPGVAVDVSHIPTAVKVVGYAGEDPTPALEGANLVLISAGVARKPGMDRSDLFNINAGIVRNLIEKVATVCPTACVGIITNPVNTTVAIAAEVLKKAGVYDKRKLFGVTSLDVLRSETFVAELKGKDVNDVKVPVIGGHSGVTILPLLSQAFEEDKIDFTAEEVAALTKRIQNAGTEVVEAKAGGGSATLSMAQAAARFARSVLKGLTGEQVVEYAYVEGNGEYARFFAQPVRLGLNGVEELLPIGTLSAYEEEAVQAMIPTLKADIELGEKFVNG</sequence>
<accession>B8F5K4</accession>
<dbReference type="EC" id="1.1.1.37" evidence="1"/>
<dbReference type="EMBL" id="CP001321">
    <property type="protein sequence ID" value="ACL32606.1"/>
    <property type="molecule type" value="Genomic_DNA"/>
</dbReference>
<dbReference type="RefSeq" id="WP_015939552.1">
    <property type="nucleotide sequence ID" value="NC_011852.1"/>
</dbReference>
<dbReference type="SMR" id="B8F5K4"/>
<dbReference type="STRING" id="557723.HAPS_0981"/>
<dbReference type="KEGG" id="hap:HAPS_0981"/>
<dbReference type="PATRIC" id="fig|557723.8.peg.981"/>
<dbReference type="HOGENOM" id="CLU_047181_1_0_6"/>
<dbReference type="Proteomes" id="UP000006743">
    <property type="component" value="Chromosome"/>
</dbReference>
<dbReference type="GO" id="GO:0005737">
    <property type="term" value="C:cytoplasm"/>
    <property type="evidence" value="ECO:0007669"/>
    <property type="project" value="TreeGrafter"/>
</dbReference>
<dbReference type="GO" id="GO:0030060">
    <property type="term" value="F:L-malate dehydrogenase (NAD+) activity"/>
    <property type="evidence" value="ECO:0007669"/>
    <property type="project" value="UniProtKB-UniRule"/>
</dbReference>
<dbReference type="GO" id="GO:0019752">
    <property type="term" value="P:carboxylic acid metabolic process"/>
    <property type="evidence" value="ECO:0007669"/>
    <property type="project" value="InterPro"/>
</dbReference>
<dbReference type="GO" id="GO:0006099">
    <property type="term" value="P:tricarboxylic acid cycle"/>
    <property type="evidence" value="ECO:0007669"/>
    <property type="project" value="UniProtKB-UniRule"/>
</dbReference>
<dbReference type="CDD" id="cd01337">
    <property type="entry name" value="MDH_glyoxysomal_mitochondrial"/>
    <property type="match status" value="1"/>
</dbReference>
<dbReference type="FunFam" id="3.40.50.720:FF:000017">
    <property type="entry name" value="Malate dehydrogenase"/>
    <property type="match status" value="1"/>
</dbReference>
<dbReference type="FunFam" id="3.90.110.10:FF:000001">
    <property type="entry name" value="Malate dehydrogenase"/>
    <property type="match status" value="1"/>
</dbReference>
<dbReference type="Gene3D" id="3.90.110.10">
    <property type="entry name" value="Lactate dehydrogenase/glycoside hydrolase, family 4, C-terminal"/>
    <property type="match status" value="1"/>
</dbReference>
<dbReference type="Gene3D" id="3.40.50.720">
    <property type="entry name" value="NAD(P)-binding Rossmann-like Domain"/>
    <property type="match status" value="1"/>
</dbReference>
<dbReference type="HAMAP" id="MF_01516">
    <property type="entry name" value="Malate_dehydrog_1"/>
    <property type="match status" value="1"/>
</dbReference>
<dbReference type="InterPro" id="IPR001557">
    <property type="entry name" value="L-lactate/malate_DH"/>
</dbReference>
<dbReference type="InterPro" id="IPR022383">
    <property type="entry name" value="Lactate/malate_DH_C"/>
</dbReference>
<dbReference type="InterPro" id="IPR001236">
    <property type="entry name" value="Lactate/malate_DH_N"/>
</dbReference>
<dbReference type="InterPro" id="IPR015955">
    <property type="entry name" value="Lactate_DH/Glyco_Ohase_4_C"/>
</dbReference>
<dbReference type="InterPro" id="IPR010097">
    <property type="entry name" value="Malate_DH_type1"/>
</dbReference>
<dbReference type="InterPro" id="IPR023958">
    <property type="entry name" value="Malate_DH_type1_bac"/>
</dbReference>
<dbReference type="InterPro" id="IPR036291">
    <property type="entry name" value="NAD(P)-bd_dom_sf"/>
</dbReference>
<dbReference type="NCBIfam" id="TIGR01772">
    <property type="entry name" value="MDH_euk_gproteo"/>
    <property type="match status" value="1"/>
</dbReference>
<dbReference type="PANTHER" id="PTHR11540">
    <property type="entry name" value="MALATE AND LACTATE DEHYDROGENASE"/>
    <property type="match status" value="1"/>
</dbReference>
<dbReference type="PANTHER" id="PTHR11540:SF16">
    <property type="entry name" value="MALATE DEHYDROGENASE, MITOCHONDRIAL"/>
    <property type="match status" value="1"/>
</dbReference>
<dbReference type="Pfam" id="PF02866">
    <property type="entry name" value="Ldh_1_C"/>
    <property type="match status" value="1"/>
</dbReference>
<dbReference type="Pfam" id="PF00056">
    <property type="entry name" value="Ldh_1_N"/>
    <property type="match status" value="1"/>
</dbReference>
<dbReference type="PIRSF" id="PIRSF000102">
    <property type="entry name" value="Lac_mal_DH"/>
    <property type="match status" value="1"/>
</dbReference>
<dbReference type="SUPFAM" id="SSF56327">
    <property type="entry name" value="LDH C-terminal domain-like"/>
    <property type="match status" value="1"/>
</dbReference>
<dbReference type="SUPFAM" id="SSF51735">
    <property type="entry name" value="NAD(P)-binding Rossmann-fold domains"/>
    <property type="match status" value="1"/>
</dbReference>
<keyword id="KW-0520">NAD</keyword>
<keyword id="KW-0560">Oxidoreductase</keyword>
<keyword id="KW-1185">Reference proteome</keyword>
<keyword id="KW-0816">Tricarboxylic acid cycle</keyword>
<reference key="1">
    <citation type="journal article" date="2009" name="J. Bacteriol.">
        <title>Complete genome sequence of Haemophilus parasuis SH0165.</title>
        <authorList>
            <person name="Yue M."/>
            <person name="Yang F."/>
            <person name="Yang J."/>
            <person name="Bei W."/>
            <person name="Cai X."/>
            <person name="Chen L."/>
            <person name="Dong J."/>
            <person name="Zhou R."/>
            <person name="Jin M."/>
            <person name="Jin Q."/>
            <person name="Chen H."/>
        </authorList>
    </citation>
    <scope>NUCLEOTIDE SEQUENCE [LARGE SCALE GENOMIC DNA]</scope>
    <source>
        <strain>SH0165</strain>
    </source>
</reference>
<feature type="chain" id="PRO_1000185078" description="Malate dehydrogenase">
    <location>
        <begin position="1"/>
        <end position="314"/>
    </location>
</feature>
<feature type="active site" description="Proton acceptor" evidence="1">
    <location>
        <position position="177"/>
    </location>
</feature>
<feature type="binding site" evidence="1">
    <location>
        <begin position="7"/>
        <end position="13"/>
    </location>
    <ligand>
        <name>NAD(+)</name>
        <dbReference type="ChEBI" id="CHEBI:57540"/>
    </ligand>
</feature>
<feature type="binding site" evidence="1">
    <location>
        <position position="34"/>
    </location>
    <ligand>
        <name>NAD(+)</name>
        <dbReference type="ChEBI" id="CHEBI:57540"/>
    </ligand>
</feature>
<feature type="binding site" evidence="1">
    <location>
        <position position="81"/>
    </location>
    <ligand>
        <name>substrate</name>
    </ligand>
</feature>
<feature type="binding site" evidence="1">
    <location>
        <position position="87"/>
    </location>
    <ligand>
        <name>substrate</name>
    </ligand>
</feature>
<feature type="binding site" evidence="1">
    <location>
        <position position="94"/>
    </location>
    <ligand>
        <name>NAD(+)</name>
        <dbReference type="ChEBI" id="CHEBI:57540"/>
    </ligand>
</feature>
<feature type="binding site" evidence="1">
    <location>
        <begin position="117"/>
        <end position="119"/>
    </location>
    <ligand>
        <name>NAD(+)</name>
        <dbReference type="ChEBI" id="CHEBI:57540"/>
    </ligand>
</feature>
<feature type="binding site" evidence="1">
    <location>
        <position position="119"/>
    </location>
    <ligand>
        <name>substrate</name>
    </ligand>
</feature>
<feature type="binding site" evidence="1">
    <location>
        <position position="153"/>
    </location>
    <ligand>
        <name>substrate</name>
    </ligand>
</feature>
<feature type="binding site" evidence="1">
    <location>
        <position position="230"/>
    </location>
    <ligand>
        <name>NAD(+)</name>
        <dbReference type="ChEBI" id="CHEBI:57540"/>
    </ligand>
</feature>
<name>MDH_GLAP5</name>